<name>PETN_OLIPU</name>
<sequence>MDIVSLAWAALMVVFTFSLSLVVWGRSGL</sequence>
<comment type="function">
    <text evidence="1">Component of the cytochrome b6-f complex, which mediates electron transfer between photosystem II (PSII) and photosystem I (PSI), cyclic electron flow around PSI, and state transitions.</text>
</comment>
<comment type="subunit">
    <text evidence="1">The 4 large subunits of the cytochrome b6-f complex are cytochrome b6, subunit IV (17 kDa polypeptide, PetD), cytochrome f and the Rieske protein, while the 4 small subunits are PetG, PetL, PetM and PetN. The complex functions as a dimer.</text>
</comment>
<comment type="subcellular location">
    <subcellularLocation>
        <location evidence="1">Plastid</location>
        <location evidence="1">Chloroplast thylakoid membrane</location>
        <topology evidence="1">Single-pass membrane protein</topology>
    </subcellularLocation>
</comment>
<comment type="similarity">
    <text evidence="1">Belongs to the PetN family.</text>
</comment>
<dbReference type="EMBL" id="AP009368">
    <property type="protein sequence ID" value="BAF49932.1"/>
    <property type="molecule type" value="Genomic_DNA"/>
</dbReference>
<dbReference type="RefSeq" id="YP_001123108.1">
    <property type="nucleotide sequence ID" value="NC_009267.1"/>
</dbReference>
<dbReference type="SMR" id="A4QJS6"/>
<dbReference type="GeneID" id="4962472"/>
<dbReference type="GO" id="GO:0009535">
    <property type="term" value="C:chloroplast thylakoid membrane"/>
    <property type="evidence" value="ECO:0007669"/>
    <property type="project" value="UniProtKB-SubCell"/>
</dbReference>
<dbReference type="GO" id="GO:0009512">
    <property type="term" value="C:cytochrome b6f complex"/>
    <property type="evidence" value="ECO:0007669"/>
    <property type="project" value="InterPro"/>
</dbReference>
<dbReference type="GO" id="GO:0045158">
    <property type="term" value="F:electron transporter, transferring electrons within cytochrome b6/f complex of photosystem II activity"/>
    <property type="evidence" value="ECO:0007669"/>
    <property type="project" value="InterPro"/>
</dbReference>
<dbReference type="GO" id="GO:0017004">
    <property type="term" value="P:cytochrome complex assembly"/>
    <property type="evidence" value="ECO:0007669"/>
    <property type="project" value="UniProtKB-UniRule"/>
</dbReference>
<dbReference type="GO" id="GO:0015979">
    <property type="term" value="P:photosynthesis"/>
    <property type="evidence" value="ECO:0007669"/>
    <property type="project" value="UniProtKB-KW"/>
</dbReference>
<dbReference type="HAMAP" id="MF_00395">
    <property type="entry name" value="Cytb6_f_PetN"/>
    <property type="match status" value="1"/>
</dbReference>
<dbReference type="InterPro" id="IPR036143">
    <property type="entry name" value="Cytochr_b6-f_cplx_su8_sf"/>
</dbReference>
<dbReference type="InterPro" id="IPR005497">
    <property type="entry name" value="Cytochrome_b6-f_cplx_su8"/>
</dbReference>
<dbReference type="Pfam" id="PF03742">
    <property type="entry name" value="PetN"/>
    <property type="match status" value="1"/>
</dbReference>
<dbReference type="SUPFAM" id="SSF103451">
    <property type="entry name" value="PetN subunit of the cytochrome b6f complex"/>
    <property type="match status" value="1"/>
</dbReference>
<keyword id="KW-0150">Chloroplast</keyword>
<keyword id="KW-0249">Electron transport</keyword>
<keyword id="KW-0472">Membrane</keyword>
<keyword id="KW-0602">Photosynthesis</keyword>
<keyword id="KW-0934">Plastid</keyword>
<keyword id="KW-0793">Thylakoid</keyword>
<keyword id="KW-0812">Transmembrane</keyword>
<keyword id="KW-1133">Transmembrane helix</keyword>
<keyword id="KW-0813">Transport</keyword>
<protein>
    <recommendedName>
        <fullName evidence="1">Cytochrome b6-f complex subunit 8</fullName>
    </recommendedName>
    <alternativeName>
        <fullName evidence="1">Cytochrome b6-f complex subunit PetN</fullName>
    </alternativeName>
    <alternativeName>
        <fullName evidence="1">Cytochrome b6-f complex subunit VIII</fullName>
    </alternativeName>
</protein>
<feature type="chain" id="PRO_0000355456" description="Cytochrome b6-f complex subunit 8">
    <location>
        <begin position="1"/>
        <end position="29"/>
    </location>
</feature>
<feature type="transmembrane region" description="Helical" evidence="1">
    <location>
        <begin position="3"/>
        <end position="23"/>
    </location>
</feature>
<accession>A4QJS6</accession>
<organism>
    <name type="scientific">Olimarabidopsis pumila</name>
    <name type="common">Dwarf rocket</name>
    <name type="synonym">Arabidopsis griffithiana</name>
    <dbReference type="NCBI Taxonomy" id="74718"/>
    <lineage>
        <taxon>Eukaryota</taxon>
        <taxon>Viridiplantae</taxon>
        <taxon>Streptophyta</taxon>
        <taxon>Embryophyta</taxon>
        <taxon>Tracheophyta</taxon>
        <taxon>Spermatophyta</taxon>
        <taxon>Magnoliopsida</taxon>
        <taxon>eudicotyledons</taxon>
        <taxon>Gunneridae</taxon>
        <taxon>Pentapetalae</taxon>
        <taxon>rosids</taxon>
        <taxon>malvids</taxon>
        <taxon>Brassicales</taxon>
        <taxon>Brassicaceae</taxon>
        <taxon>Alyssopsideae</taxon>
        <taxon>Olimarabidopsis</taxon>
    </lineage>
</organism>
<proteinExistence type="inferred from homology"/>
<evidence type="ECO:0000255" key="1">
    <source>
        <dbReference type="HAMAP-Rule" id="MF_00395"/>
    </source>
</evidence>
<reference key="1">
    <citation type="submission" date="2007-03" db="EMBL/GenBank/DDBJ databases">
        <title>Sequence analysis of Arabidopsis pumila JS2 chloroplast DNA.</title>
        <authorList>
            <person name="Hosouchi T."/>
            <person name="Tsuruoka H."/>
            <person name="Kotani H."/>
        </authorList>
    </citation>
    <scope>NUCLEOTIDE SEQUENCE [LARGE SCALE GENOMIC DNA]</scope>
</reference>
<gene>
    <name evidence="1" type="primary">petN</name>
</gene>
<geneLocation type="chloroplast"/>